<accession>Q1LTH2</accession>
<dbReference type="EC" id="2.7.6.1" evidence="1"/>
<dbReference type="EMBL" id="CP000238">
    <property type="protein sequence ID" value="ABF13890.1"/>
    <property type="molecule type" value="Genomic_DNA"/>
</dbReference>
<dbReference type="RefSeq" id="WP_011520475.1">
    <property type="nucleotide sequence ID" value="NC_007984.1"/>
</dbReference>
<dbReference type="SMR" id="Q1LTH2"/>
<dbReference type="STRING" id="374463.BCI_0293"/>
<dbReference type="KEGG" id="bci:BCI_0293"/>
<dbReference type="HOGENOM" id="CLU_033546_2_0_6"/>
<dbReference type="OrthoDB" id="9777067at2"/>
<dbReference type="UniPathway" id="UPA00087">
    <property type="reaction ID" value="UER00172"/>
</dbReference>
<dbReference type="Proteomes" id="UP000002427">
    <property type="component" value="Chromosome"/>
</dbReference>
<dbReference type="GO" id="GO:0005737">
    <property type="term" value="C:cytoplasm"/>
    <property type="evidence" value="ECO:0007669"/>
    <property type="project" value="UniProtKB-SubCell"/>
</dbReference>
<dbReference type="GO" id="GO:0002189">
    <property type="term" value="C:ribose phosphate diphosphokinase complex"/>
    <property type="evidence" value="ECO:0007669"/>
    <property type="project" value="TreeGrafter"/>
</dbReference>
<dbReference type="GO" id="GO:0005524">
    <property type="term" value="F:ATP binding"/>
    <property type="evidence" value="ECO:0007669"/>
    <property type="project" value="UniProtKB-KW"/>
</dbReference>
<dbReference type="GO" id="GO:0016301">
    <property type="term" value="F:kinase activity"/>
    <property type="evidence" value="ECO:0007669"/>
    <property type="project" value="UniProtKB-KW"/>
</dbReference>
<dbReference type="GO" id="GO:0000287">
    <property type="term" value="F:magnesium ion binding"/>
    <property type="evidence" value="ECO:0007669"/>
    <property type="project" value="UniProtKB-UniRule"/>
</dbReference>
<dbReference type="GO" id="GO:0004749">
    <property type="term" value="F:ribose phosphate diphosphokinase activity"/>
    <property type="evidence" value="ECO:0007669"/>
    <property type="project" value="UniProtKB-UniRule"/>
</dbReference>
<dbReference type="GO" id="GO:0006015">
    <property type="term" value="P:5-phosphoribose 1-diphosphate biosynthetic process"/>
    <property type="evidence" value="ECO:0007669"/>
    <property type="project" value="UniProtKB-UniRule"/>
</dbReference>
<dbReference type="GO" id="GO:0006164">
    <property type="term" value="P:purine nucleotide biosynthetic process"/>
    <property type="evidence" value="ECO:0007669"/>
    <property type="project" value="TreeGrafter"/>
</dbReference>
<dbReference type="GO" id="GO:0009156">
    <property type="term" value="P:ribonucleoside monophosphate biosynthetic process"/>
    <property type="evidence" value="ECO:0007669"/>
    <property type="project" value="InterPro"/>
</dbReference>
<dbReference type="CDD" id="cd06223">
    <property type="entry name" value="PRTases_typeI"/>
    <property type="match status" value="1"/>
</dbReference>
<dbReference type="FunFam" id="3.40.50.2020:FF:000001">
    <property type="entry name" value="Ribose-phosphate pyrophosphokinase"/>
    <property type="match status" value="1"/>
</dbReference>
<dbReference type="Gene3D" id="3.40.50.2020">
    <property type="match status" value="2"/>
</dbReference>
<dbReference type="HAMAP" id="MF_00583_B">
    <property type="entry name" value="RibP_PPkinase_B"/>
    <property type="match status" value="1"/>
</dbReference>
<dbReference type="InterPro" id="IPR000842">
    <property type="entry name" value="PRib_PP_synth_CS"/>
</dbReference>
<dbReference type="InterPro" id="IPR029099">
    <property type="entry name" value="Pribosyltran_N"/>
</dbReference>
<dbReference type="InterPro" id="IPR000836">
    <property type="entry name" value="PRibTrfase_dom"/>
</dbReference>
<dbReference type="InterPro" id="IPR029057">
    <property type="entry name" value="PRTase-like"/>
</dbReference>
<dbReference type="InterPro" id="IPR005946">
    <property type="entry name" value="Rib-P_diPkinase"/>
</dbReference>
<dbReference type="InterPro" id="IPR037515">
    <property type="entry name" value="Rib-P_diPkinase_bac"/>
</dbReference>
<dbReference type="NCBIfam" id="NF002320">
    <property type="entry name" value="PRK01259.1"/>
    <property type="match status" value="1"/>
</dbReference>
<dbReference type="NCBIfam" id="TIGR01251">
    <property type="entry name" value="ribP_PPkin"/>
    <property type="match status" value="1"/>
</dbReference>
<dbReference type="PANTHER" id="PTHR10210">
    <property type="entry name" value="RIBOSE-PHOSPHATE DIPHOSPHOKINASE FAMILY MEMBER"/>
    <property type="match status" value="1"/>
</dbReference>
<dbReference type="PANTHER" id="PTHR10210:SF41">
    <property type="entry name" value="RIBOSE-PHOSPHATE PYROPHOSPHOKINASE 1, CHLOROPLASTIC"/>
    <property type="match status" value="1"/>
</dbReference>
<dbReference type="Pfam" id="PF14572">
    <property type="entry name" value="Pribosyl_synth"/>
    <property type="match status" value="1"/>
</dbReference>
<dbReference type="Pfam" id="PF13793">
    <property type="entry name" value="Pribosyltran_N"/>
    <property type="match status" value="1"/>
</dbReference>
<dbReference type="SMART" id="SM01400">
    <property type="entry name" value="Pribosyltran_N"/>
    <property type="match status" value="1"/>
</dbReference>
<dbReference type="SUPFAM" id="SSF53271">
    <property type="entry name" value="PRTase-like"/>
    <property type="match status" value="1"/>
</dbReference>
<dbReference type="PROSITE" id="PS00114">
    <property type="entry name" value="PRPP_SYNTHASE"/>
    <property type="match status" value="1"/>
</dbReference>
<sequence length="312" mass="34089">MKLFAGNAIPELAQLIANRLYTSLGVAAVNRFSDGEISVQINENVRGGDLFIIQSTCAPTNDNLMELVVMVDALRRASAGRITAVMPYFGYSRQDRRVRSARVPITAKVVADFLSSVGVDRVLTVDLHAEQIQGFFDVPVDNVFGSPILLEDMLQQDFNNPIVVSPDIGGVVRARAIAKLLNDTDMAIIDKRRPRANMSQVMHIIGEVADRDCVLVDDMIDTSSTLCKAAEALKEHGAKRVFAYATHPIFSGQAHANIKNSVIDEVIICDTIPLNSAIKALPNVRTLTLSGMLAEAIRRISNEESISAMFEH</sequence>
<name>KPRS_BAUCH</name>
<comment type="function">
    <text evidence="1">Involved in the biosynthesis of the central metabolite phospho-alpha-D-ribosyl-1-pyrophosphate (PRPP) via the transfer of pyrophosphoryl group from ATP to 1-hydroxyl of ribose-5-phosphate (Rib-5-P).</text>
</comment>
<comment type="catalytic activity">
    <reaction evidence="1">
        <text>D-ribose 5-phosphate + ATP = 5-phospho-alpha-D-ribose 1-diphosphate + AMP + H(+)</text>
        <dbReference type="Rhea" id="RHEA:15609"/>
        <dbReference type="ChEBI" id="CHEBI:15378"/>
        <dbReference type="ChEBI" id="CHEBI:30616"/>
        <dbReference type="ChEBI" id="CHEBI:58017"/>
        <dbReference type="ChEBI" id="CHEBI:78346"/>
        <dbReference type="ChEBI" id="CHEBI:456215"/>
        <dbReference type="EC" id="2.7.6.1"/>
    </reaction>
</comment>
<comment type="cofactor">
    <cofactor evidence="1">
        <name>Mg(2+)</name>
        <dbReference type="ChEBI" id="CHEBI:18420"/>
    </cofactor>
    <text evidence="1">Binds 2 Mg(2+) ions per subunit.</text>
</comment>
<comment type="pathway">
    <text evidence="1">Metabolic intermediate biosynthesis; 5-phospho-alpha-D-ribose 1-diphosphate biosynthesis; 5-phospho-alpha-D-ribose 1-diphosphate from D-ribose 5-phosphate (route I): step 1/1.</text>
</comment>
<comment type="subunit">
    <text evidence="1">Homohexamer.</text>
</comment>
<comment type="subcellular location">
    <subcellularLocation>
        <location evidence="1">Cytoplasm</location>
    </subcellularLocation>
</comment>
<comment type="similarity">
    <text evidence="1">Belongs to the ribose-phosphate pyrophosphokinase family. Class I subfamily.</text>
</comment>
<organism>
    <name type="scientific">Baumannia cicadellinicola subsp. Homalodisca coagulata</name>
    <dbReference type="NCBI Taxonomy" id="374463"/>
    <lineage>
        <taxon>Bacteria</taxon>
        <taxon>Pseudomonadati</taxon>
        <taxon>Pseudomonadota</taxon>
        <taxon>Gammaproteobacteria</taxon>
        <taxon>Candidatus Palibaumannia</taxon>
    </lineage>
</organism>
<protein>
    <recommendedName>
        <fullName evidence="1">Ribose-phosphate pyrophosphokinase</fullName>
        <shortName evidence="1">RPPK</shortName>
        <ecNumber evidence="1">2.7.6.1</ecNumber>
    </recommendedName>
    <alternativeName>
        <fullName evidence="1">5-phospho-D-ribosyl alpha-1-diphosphate synthase</fullName>
    </alternativeName>
    <alternativeName>
        <fullName evidence="1">Phosphoribosyl diphosphate synthase</fullName>
    </alternativeName>
    <alternativeName>
        <fullName evidence="1">Phosphoribosyl pyrophosphate synthase</fullName>
        <shortName evidence="1">P-Rib-PP synthase</shortName>
        <shortName evidence="1">PRPP synthase</shortName>
        <shortName evidence="1">PRPPase</shortName>
    </alternativeName>
</protein>
<keyword id="KW-0067">ATP-binding</keyword>
<keyword id="KW-0963">Cytoplasm</keyword>
<keyword id="KW-0418">Kinase</keyword>
<keyword id="KW-0460">Magnesium</keyword>
<keyword id="KW-0479">Metal-binding</keyword>
<keyword id="KW-0545">Nucleotide biosynthesis</keyword>
<keyword id="KW-0547">Nucleotide-binding</keyword>
<keyword id="KW-1185">Reference proteome</keyword>
<keyword id="KW-0808">Transferase</keyword>
<reference key="1">
    <citation type="journal article" date="2006" name="PLoS Biol.">
        <title>Metabolic complementarity and genomics of the dual bacterial symbiosis of sharpshooters.</title>
        <authorList>
            <person name="Wu D."/>
            <person name="Daugherty S.C."/>
            <person name="Van Aken S.E."/>
            <person name="Pai G.H."/>
            <person name="Watkins K.L."/>
            <person name="Khouri H."/>
            <person name="Tallon L.J."/>
            <person name="Zaborsky J.M."/>
            <person name="Dunbar H.E."/>
            <person name="Tran P.L."/>
            <person name="Moran N.A."/>
            <person name="Eisen J.A."/>
        </authorList>
    </citation>
    <scope>NUCLEOTIDE SEQUENCE [LARGE SCALE GENOMIC DNA]</scope>
</reference>
<gene>
    <name evidence="1" type="primary">prs</name>
    <name type="ordered locus">BCI_0293</name>
</gene>
<proteinExistence type="inferred from homology"/>
<evidence type="ECO:0000255" key="1">
    <source>
        <dbReference type="HAMAP-Rule" id="MF_00583"/>
    </source>
</evidence>
<feature type="chain" id="PRO_1000061199" description="Ribose-phosphate pyrophosphokinase">
    <location>
        <begin position="1"/>
        <end position="312"/>
    </location>
</feature>
<feature type="active site" evidence="1">
    <location>
        <position position="191"/>
    </location>
</feature>
<feature type="binding site" evidence="1">
    <location>
        <begin position="34"/>
        <end position="36"/>
    </location>
    <ligand>
        <name>ATP</name>
        <dbReference type="ChEBI" id="CHEBI:30616"/>
    </ligand>
</feature>
<feature type="binding site" evidence="1">
    <location>
        <begin position="93"/>
        <end position="94"/>
    </location>
    <ligand>
        <name>ATP</name>
        <dbReference type="ChEBI" id="CHEBI:30616"/>
    </ligand>
</feature>
<feature type="binding site" evidence="1">
    <location>
        <position position="128"/>
    </location>
    <ligand>
        <name>Mg(2+)</name>
        <dbReference type="ChEBI" id="CHEBI:18420"/>
        <label>1</label>
    </ligand>
</feature>
<feature type="binding site" evidence="1">
    <location>
        <position position="167"/>
    </location>
    <ligand>
        <name>Mg(2+)</name>
        <dbReference type="ChEBI" id="CHEBI:18420"/>
        <label>2</label>
    </ligand>
</feature>
<feature type="binding site" evidence="1">
    <location>
        <position position="193"/>
    </location>
    <ligand>
        <name>D-ribose 5-phosphate</name>
        <dbReference type="ChEBI" id="CHEBI:78346"/>
    </ligand>
</feature>
<feature type="binding site" evidence="1">
    <location>
        <position position="217"/>
    </location>
    <ligand>
        <name>D-ribose 5-phosphate</name>
        <dbReference type="ChEBI" id="CHEBI:78346"/>
    </ligand>
</feature>